<sequence length="356" mass="40695">MTERRIIHIDMDYFFAQVEMRDNPKLKGKPVIVGGKAIHRGVVSTASYEARAYGVHSAMPMTQAHKLCPNGYYVTSRFDTYREVSGQIMKIFRSYTELVEPMSLDEAYLDITHLVRPDLPASTIANYIRRDIYEVTRLTASAGVSYNKFLAKLASGMNKPNGLTVIDYNNVHEILMQLDIGDFPGVGKASKKKMHQHHIYTGQDLYNKDEFELIRLFGKRGRGLYNKARGIDHNEVKASRVRKSVGTERTFSTDVNDDDVILRKIRELSGKTAERLNKIQKSGKTVTVKIKTYQYETISKQKSLRDPIRTETDIYNIAYTLYNDLKDPEIPIRLIGVTVGSLEQSDFKNLTIYDFI</sequence>
<reference key="1">
    <citation type="journal article" date="2005" name="J. Bacteriol.">
        <title>Insights on evolution of virulence and resistance from the complete genome analysis of an early methicillin-resistant Staphylococcus aureus strain and a biofilm-producing methicillin-resistant Staphylococcus epidermidis strain.</title>
        <authorList>
            <person name="Gill S.R."/>
            <person name="Fouts D.E."/>
            <person name="Archer G.L."/>
            <person name="Mongodin E.F."/>
            <person name="DeBoy R.T."/>
            <person name="Ravel J."/>
            <person name="Paulsen I.T."/>
            <person name="Kolonay J.F."/>
            <person name="Brinkac L.M."/>
            <person name="Beanan M.J."/>
            <person name="Dodson R.J."/>
            <person name="Daugherty S.C."/>
            <person name="Madupu R."/>
            <person name="Angiuoli S.V."/>
            <person name="Durkin A.S."/>
            <person name="Haft D.H."/>
            <person name="Vamathevan J.J."/>
            <person name="Khouri H."/>
            <person name="Utterback T.R."/>
            <person name="Lee C."/>
            <person name="Dimitrov G."/>
            <person name="Jiang L."/>
            <person name="Qin H."/>
            <person name="Weidman J."/>
            <person name="Tran K."/>
            <person name="Kang K.H."/>
            <person name="Hance I.R."/>
            <person name="Nelson K.E."/>
            <person name="Fraser C.M."/>
        </authorList>
    </citation>
    <scope>NUCLEOTIDE SEQUENCE [LARGE SCALE GENOMIC DNA]</scope>
    <source>
        <strain>ATCC 35984 / DSM 28319 / BCRC 17069 / CCUG 31568 / BM 3577 / RP62A</strain>
    </source>
</reference>
<proteinExistence type="inferred from homology"/>
<organism>
    <name type="scientific">Staphylococcus epidermidis (strain ATCC 35984 / DSM 28319 / BCRC 17069 / CCUG 31568 / BM 3577 / RP62A)</name>
    <dbReference type="NCBI Taxonomy" id="176279"/>
    <lineage>
        <taxon>Bacteria</taxon>
        <taxon>Bacillati</taxon>
        <taxon>Bacillota</taxon>
        <taxon>Bacilli</taxon>
        <taxon>Bacillales</taxon>
        <taxon>Staphylococcaceae</taxon>
        <taxon>Staphylococcus</taxon>
    </lineage>
</organism>
<keyword id="KW-0963">Cytoplasm</keyword>
<keyword id="KW-0227">DNA damage</keyword>
<keyword id="KW-0234">DNA repair</keyword>
<keyword id="KW-0235">DNA replication</keyword>
<keyword id="KW-0238">DNA-binding</keyword>
<keyword id="KW-0239">DNA-directed DNA polymerase</keyword>
<keyword id="KW-0460">Magnesium</keyword>
<keyword id="KW-0479">Metal-binding</keyword>
<keyword id="KW-0515">Mutator protein</keyword>
<keyword id="KW-0548">Nucleotidyltransferase</keyword>
<keyword id="KW-1185">Reference proteome</keyword>
<keyword id="KW-0808">Transferase</keyword>
<feature type="chain" id="PRO_0000173950" description="DNA polymerase IV">
    <location>
        <begin position="1"/>
        <end position="356"/>
    </location>
</feature>
<feature type="domain" description="UmuC" evidence="1">
    <location>
        <begin position="6"/>
        <end position="187"/>
    </location>
</feature>
<feature type="active site" evidence="1">
    <location>
        <position position="106"/>
    </location>
</feature>
<feature type="binding site" evidence="1">
    <location>
        <position position="10"/>
    </location>
    <ligand>
        <name>Mg(2+)</name>
        <dbReference type="ChEBI" id="CHEBI:18420"/>
    </ligand>
</feature>
<feature type="binding site" evidence="1">
    <location>
        <position position="105"/>
    </location>
    <ligand>
        <name>Mg(2+)</name>
        <dbReference type="ChEBI" id="CHEBI:18420"/>
    </ligand>
</feature>
<feature type="site" description="Substrate discrimination" evidence="1">
    <location>
        <position position="15"/>
    </location>
</feature>
<evidence type="ECO:0000255" key="1">
    <source>
        <dbReference type="HAMAP-Rule" id="MF_01113"/>
    </source>
</evidence>
<comment type="function">
    <text evidence="1">Poorly processive, error-prone DNA polymerase involved in untargeted mutagenesis. Copies undamaged DNA at stalled replication forks, which arise in vivo from mismatched or misaligned primer ends. These misaligned primers can be extended by PolIV. Exhibits no 3'-5' exonuclease (proofreading) activity. May be involved in translesional synthesis, in conjunction with the beta clamp from PolIII.</text>
</comment>
<comment type="catalytic activity">
    <reaction evidence="1">
        <text>DNA(n) + a 2'-deoxyribonucleoside 5'-triphosphate = DNA(n+1) + diphosphate</text>
        <dbReference type="Rhea" id="RHEA:22508"/>
        <dbReference type="Rhea" id="RHEA-COMP:17339"/>
        <dbReference type="Rhea" id="RHEA-COMP:17340"/>
        <dbReference type="ChEBI" id="CHEBI:33019"/>
        <dbReference type="ChEBI" id="CHEBI:61560"/>
        <dbReference type="ChEBI" id="CHEBI:173112"/>
        <dbReference type="EC" id="2.7.7.7"/>
    </reaction>
</comment>
<comment type="cofactor">
    <cofactor evidence="1">
        <name>Mg(2+)</name>
        <dbReference type="ChEBI" id="CHEBI:18420"/>
    </cofactor>
    <text evidence="1">Binds 2 magnesium ions per subunit.</text>
</comment>
<comment type="subunit">
    <text evidence="1">Monomer.</text>
</comment>
<comment type="subcellular location">
    <subcellularLocation>
        <location evidence="1">Cytoplasm</location>
    </subcellularLocation>
</comment>
<comment type="similarity">
    <text evidence="1">Belongs to the DNA polymerase type-Y family.</text>
</comment>
<name>DPO4_STAEQ</name>
<protein>
    <recommendedName>
        <fullName evidence="1">DNA polymerase IV</fullName>
        <shortName evidence="1">Pol IV</shortName>
        <ecNumber evidence="1">2.7.7.7</ecNumber>
    </recommendedName>
</protein>
<gene>
    <name evidence="1" type="primary">dinB</name>
    <name type="ordered locus">SERP1433</name>
</gene>
<accession>Q5HN39</accession>
<dbReference type="EC" id="2.7.7.7" evidence="1"/>
<dbReference type="EMBL" id="CP000029">
    <property type="protein sequence ID" value="AAW54805.1"/>
    <property type="molecule type" value="Genomic_DNA"/>
</dbReference>
<dbReference type="RefSeq" id="WP_010959208.1">
    <property type="nucleotide sequence ID" value="NC_002976.3"/>
</dbReference>
<dbReference type="SMR" id="Q5HN39"/>
<dbReference type="STRING" id="176279.SERP1433"/>
<dbReference type="KEGG" id="ser:SERP1433"/>
<dbReference type="eggNOG" id="COG0389">
    <property type="taxonomic scope" value="Bacteria"/>
</dbReference>
<dbReference type="HOGENOM" id="CLU_012348_1_2_9"/>
<dbReference type="Proteomes" id="UP000000531">
    <property type="component" value="Chromosome"/>
</dbReference>
<dbReference type="GO" id="GO:0005829">
    <property type="term" value="C:cytosol"/>
    <property type="evidence" value="ECO:0007669"/>
    <property type="project" value="TreeGrafter"/>
</dbReference>
<dbReference type="GO" id="GO:0003684">
    <property type="term" value="F:damaged DNA binding"/>
    <property type="evidence" value="ECO:0007669"/>
    <property type="project" value="InterPro"/>
</dbReference>
<dbReference type="GO" id="GO:0003887">
    <property type="term" value="F:DNA-directed DNA polymerase activity"/>
    <property type="evidence" value="ECO:0007669"/>
    <property type="project" value="UniProtKB-UniRule"/>
</dbReference>
<dbReference type="GO" id="GO:0000287">
    <property type="term" value="F:magnesium ion binding"/>
    <property type="evidence" value="ECO:0007669"/>
    <property type="project" value="UniProtKB-UniRule"/>
</dbReference>
<dbReference type="GO" id="GO:0006261">
    <property type="term" value="P:DNA-templated DNA replication"/>
    <property type="evidence" value="ECO:0007669"/>
    <property type="project" value="UniProtKB-UniRule"/>
</dbReference>
<dbReference type="GO" id="GO:0042276">
    <property type="term" value="P:error-prone translesion synthesis"/>
    <property type="evidence" value="ECO:0007669"/>
    <property type="project" value="TreeGrafter"/>
</dbReference>
<dbReference type="GO" id="GO:0009432">
    <property type="term" value="P:SOS response"/>
    <property type="evidence" value="ECO:0007669"/>
    <property type="project" value="TreeGrafter"/>
</dbReference>
<dbReference type="CDD" id="cd03586">
    <property type="entry name" value="PolY_Pol_IV_kappa"/>
    <property type="match status" value="1"/>
</dbReference>
<dbReference type="FunFam" id="3.30.1490.100:FF:000004">
    <property type="entry name" value="DNA polymerase IV"/>
    <property type="match status" value="1"/>
</dbReference>
<dbReference type="FunFam" id="3.40.1170.60:FF:000001">
    <property type="entry name" value="DNA polymerase IV"/>
    <property type="match status" value="1"/>
</dbReference>
<dbReference type="Gene3D" id="3.30.70.270">
    <property type="match status" value="1"/>
</dbReference>
<dbReference type="Gene3D" id="3.40.1170.60">
    <property type="match status" value="1"/>
</dbReference>
<dbReference type="Gene3D" id="1.10.150.20">
    <property type="entry name" value="5' to 3' exonuclease, C-terminal subdomain"/>
    <property type="match status" value="1"/>
</dbReference>
<dbReference type="Gene3D" id="3.30.1490.100">
    <property type="entry name" value="DNA polymerase, Y-family, little finger domain"/>
    <property type="match status" value="1"/>
</dbReference>
<dbReference type="HAMAP" id="MF_01113">
    <property type="entry name" value="DNApol_IV"/>
    <property type="match status" value="1"/>
</dbReference>
<dbReference type="InterPro" id="IPR043502">
    <property type="entry name" value="DNA/RNA_pol_sf"/>
</dbReference>
<dbReference type="InterPro" id="IPR036775">
    <property type="entry name" value="DNA_pol_Y-fam_lit_finger_sf"/>
</dbReference>
<dbReference type="InterPro" id="IPR017961">
    <property type="entry name" value="DNA_pol_Y-fam_little_finger"/>
</dbReference>
<dbReference type="InterPro" id="IPR050116">
    <property type="entry name" value="DNA_polymerase-Y"/>
</dbReference>
<dbReference type="InterPro" id="IPR022880">
    <property type="entry name" value="DNApol_IV"/>
</dbReference>
<dbReference type="InterPro" id="IPR053848">
    <property type="entry name" value="IMS_HHH_1"/>
</dbReference>
<dbReference type="InterPro" id="IPR043128">
    <property type="entry name" value="Rev_trsase/Diguanyl_cyclase"/>
</dbReference>
<dbReference type="InterPro" id="IPR001126">
    <property type="entry name" value="UmuC"/>
</dbReference>
<dbReference type="NCBIfam" id="NF002677">
    <property type="entry name" value="PRK02406.1"/>
    <property type="match status" value="1"/>
</dbReference>
<dbReference type="NCBIfam" id="NF010731">
    <property type="entry name" value="PRK14133.1"/>
    <property type="match status" value="1"/>
</dbReference>
<dbReference type="PANTHER" id="PTHR11076:SF33">
    <property type="entry name" value="DNA POLYMERASE KAPPA"/>
    <property type="match status" value="1"/>
</dbReference>
<dbReference type="PANTHER" id="PTHR11076">
    <property type="entry name" value="DNA REPAIR POLYMERASE UMUC / TRANSFERASE FAMILY MEMBER"/>
    <property type="match status" value="1"/>
</dbReference>
<dbReference type="Pfam" id="PF00817">
    <property type="entry name" value="IMS"/>
    <property type="match status" value="1"/>
</dbReference>
<dbReference type="Pfam" id="PF11799">
    <property type="entry name" value="IMS_C"/>
    <property type="match status" value="1"/>
</dbReference>
<dbReference type="Pfam" id="PF21999">
    <property type="entry name" value="IMS_HHH_1"/>
    <property type="match status" value="1"/>
</dbReference>
<dbReference type="SUPFAM" id="SSF56672">
    <property type="entry name" value="DNA/RNA polymerases"/>
    <property type="match status" value="1"/>
</dbReference>
<dbReference type="SUPFAM" id="SSF100879">
    <property type="entry name" value="Lesion bypass DNA polymerase (Y-family), little finger domain"/>
    <property type="match status" value="1"/>
</dbReference>
<dbReference type="PROSITE" id="PS50173">
    <property type="entry name" value="UMUC"/>
    <property type="match status" value="1"/>
</dbReference>